<name>ZHD_BIOOC</name>
<dbReference type="EC" id="3.1.1.-" evidence="2 3 4 5 6"/>
<dbReference type="EMBL" id="AB076037">
    <property type="protein sequence ID" value="BAC02717.1"/>
    <property type="molecule type" value="Genomic_DNA"/>
</dbReference>
<dbReference type="PDB" id="3WZL">
    <property type="method" value="X-ray"/>
    <property type="resolution" value="2.60 A"/>
    <property type="chains" value="A/B/C=1-264"/>
</dbReference>
<dbReference type="PDB" id="3WZM">
    <property type="method" value="X-ray"/>
    <property type="resolution" value="2.48 A"/>
    <property type="chains" value="A/B/C=1-264"/>
</dbReference>
<dbReference type="PDB" id="5C7Y">
    <property type="method" value="X-ray"/>
    <property type="resolution" value="1.75 A"/>
    <property type="chains" value="A/B=1-264"/>
</dbReference>
<dbReference type="PDB" id="5C81">
    <property type="method" value="X-ray"/>
    <property type="resolution" value="1.80 A"/>
    <property type="chains" value="A/B=1-264"/>
</dbReference>
<dbReference type="PDB" id="5C8X">
    <property type="method" value="X-ray"/>
    <property type="resolution" value="1.80 A"/>
    <property type="chains" value="A/B=1-264"/>
</dbReference>
<dbReference type="PDB" id="5C8Z">
    <property type="method" value="X-ray"/>
    <property type="resolution" value="1.60 A"/>
    <property type="chains" value="A/B=1-264"/>
</dbReference>
<dbReference type="PDB" id="5IE4">
    <property type="method" value="X-ray"/>
    <property type="resolution" value="2.80 A"/>
    <property type="chains" value="A/B/C=1-264"/>
</dbReference>
<dbReference type="PDB" id="5IE5">
    <property type="method" value="X-ray"/>
    <property type="resolution" value="2.39 A"/>
    <property type="chains" value="A/B/C=1-264"/>
</dbReference>
<dbReference type="PDB" id="5IE6">
    <property type="method" value="X-ray"/>
    <property type="resolution" value="2.67 A"/>
    <property type="chains" value="A/B/C=1-264"/>
</dbReference>
<dbReference type="PDB" id="5IE7">
    <property type="method" value="X-ray"/>
    <property type="resolution" value="2.50 A"/>
    <property type="chains" value="A/B/C=1-264"/>
</dbReference>
<dbReference type="PDB" id="5XMW">
    <property type="method" value="X-ray"/>
    <property type="resolution" value="3.00 A"/>
    <property type="chains" value="A/B=1-264"/>
</dbReference>
<dbReference type="PDB" id="6JRD">
    <property type="method" value="X-ray"/>
    <property type="resolution" value="1.65 A"/>
    <property type="chains" value="A/B=1-264"/>
</dbReference>
<dbReference type="PDBsum" id="3WZL"/>
<dbReference type="PDBsum" id="3WZM"/>
<dbReference type="PDBsum" id="5C7Y"/>
<dbReference type="PDBsum" id="5C81"/>
<dbReference type="PDBsum" id="5C8X"/>
<dbReference type="PDBsum" id="5C8Z"/>
<dbReference type="PDBsum" id="5IE4"/>
<dbReference type="PDBsum" id="5IE5"/>
<dbReference type="PDBsum" id="5IE6"/>
<dbReference type="PDBsum" id="5IE7"/>
<dbReference type="PDBsum" id="5XMW"/>
<dbReference type="PDBsum" id="6JRD"/>
<dbReference type="SMR" id="Q8NKB0"/>
<dbReference type="ESTHER" id="biooc-ZHD101">
    <property type="family name" value="Zearalenone-hydrolase"/>
</dbReference>
<dbReference type="EvolutionaryTrace" id="Q8NKB0"/>
<dbReference type="GO" id="GO:0016787">
    <property type="term" value="F:hydrolase activity"/>
    <property type="evidence" value="ECO:0007669"/>
    <property type="project" value="UniProtKB-KW"/>
</dbReference>
<dbReference type="GO" id="GO:0009636">
    <property type="term" value="P:response to toxic substance"/>
    <property type="evidence" value="ECO:0007669"/>
    <property type="project" value="UniProtKB-KW"/>
</dbReference>
<dbReference type="Gene3D" id="3.40.50.1820">
    <property type="entry name" value="alpha/beta hydrolase"/>
    <property type="match status" value="1"/>
</dbReference>
<dbReference type="InterPro" id="IPR050471">
    <property type="entry name" value="AB_hydrolase"/>
</dbReference>
<dbReference type="InterPro" id="IPR000073">
    <property type="entry name" value="AB_hydrolase_1"/>
</dbReference>
<dbReference type="InterPro" id="IPR029058">
    <property type="entry name" value="AB_hydrolase_fold"/>
</dbReference>
<dbReference type="PANTHER" id="PTHR43433:SF5">
    <property type="entry name" value="AB HYDROLASE-1 DOMAIN-CONTAINING PROTEIN"/>
    <property type="match status" value="1"/>
</dbReference>
<dbReference type="PANTHER" id="PTHR43433">
    <property type="entry name" value="HYDROLASE, ALPHA/BETA FOLD FAMILY PROTEIN"/>
    <property type="match status" value="1"/>
</dbReference>
<dbReference type="Pfam" id="PF00561">
    <property type="entry name" value="Abhydrolase_1"/>
    <property type="match status" value="1"/>
</dbReference>
<dbReference type="SUPFAM" id="SSF53474">
    <property type="entry name" value="alpha/beta-Hydrolases"/>
    <property type="match status" value="1"/>
</dbReference>
<feature type="chain" id="PRO_0000460591" description="Zearalenone hydrolase">
    <location>
        <begin position="1"/>
        <end position="264"/>
    </location>
</feature>
<feature type="domain" description="AB hydrolase-1" evidence="1">
    <location>
        <begin position="27"/>
        <end position="207"/>
    </location>
</feature>
<feature type="active site" evidence="3 4">
    <location>
        <position position="102"/>
    </location>
</feature>
<feature type="active site" evidence="4">
    <location>
        <position position="126"/>
    </location>
</feature>
<feature type="active site" evidence="4">
    <location>
        <position position="242"/>
    </location>
</feature>
<feature type="binding site" evidence="3 4 6 11 12 16 17 18 19">
    <location>
        <position position="32"/>
    </location>
    <ligand>
        <name>zearalenone</name>
        <dbReference type="ChEBI" id="CHEBI:10106"/>
    </ligand>
</feature>
<feature type="binding site" evidence="5 7 12 21">
    <location>
        <position position="102"/>
    </location>
    <ligand>
        <name>zearalenone</name>
        <dbReference type="ChEBI" id="CHEBI:10106"/>
    </ligand>
</feature>
<feature type="binding site" evidence="4 6 7 11 16 17 18 19 21">
    <location>
        <position position="103"/>
    </location>
    <ligand>
        <name>zearalenone</name>
        <dbReference type="ChEBI" id="CHEBI:10106"/>
    </ligand>
</feature>
<feature type="binding site" evidence="4 6 7 11 16 17 18 19 21">
    <location>
        <position position="183"/>
    </location>
    <ligand>
        <name>zearalenone</name>
        <dbReference type="ChEBI" id="CHEBI:10106"/>
    </ligand>
</feature>
<feature type="binding site" evidence="5 12">
    <location>
        <position position="187"/>
    </location>
    <ligand>
        <name>zearalenone</name>
        <dbReference type="ChEBI" id="CHEBI:10106"/>
    </ligand>
</feature>
<feature type="binding site" evidence="7 21">
    <location>
        <position position="220"/>
    </location>
    <ligand>
        <name>zearalenone</name>
        <dbReference type="ChEBI" id="CHEBI:10106"/>
    </ligand>
</feature>
<feature type="binding site" evidence="4 6 11 17 18">
    <location>
        <position position="242"/>
    </location>
    <ligand>
        <name>zearalenone</name>
        <dbReference type="ChEBI" id="CHEBI:10106"/>
    </ligand>
</feature>
<feature type="mutagenesis site" description="Abolishes the catalytic activity." evidence="6">
    <original>S</original>
    <variation>A</variation>
    <location>
        <position position="102"/>
    </location>
</feature>
<feature type="mutagenesis site" description="Abolishes the catalytic activity." evidence="4">
    <original>E</original>
    <variation>A</variation>
    <location>
        <position position="126"/>
    </location>
</feature>
<feature type="mutagenesis site" description="Retains about 70% catalytic activity." evidence="4">
    <original>H</original>
    <variation>A</variation>
    <location>
        <position position="134"/>
    </location>
</feature>
<feature type="mutagenesis site" description="Retains about 50% catalytic activity." evidence="4">
    <original>V</original>
    <variation>D</variation>
    <location>
        <position position="153"/>
    </location>
</feature>
<feature type="mutagenesis site" description="Maintains the catalytic activity for ZEN but shows a 3.7-fold increase in specific activity against alpha-ZOL." evidence="4 6">
    <original>V</original>
    <variation>H</variation>
    <location>
        <position position="153"/>
    </location>
</feature>
<feature type="mutagenesis site" description="Strongly reduces the catalytic activity." evidence="4">
    <original>V</original>
    <variation>D</variation>
    <location>
        <position position="158"/>
    </location>
</feature>
<feature type="mutagenesis site" description="Retains about 75% catalytic activity." evidence="4">
    <original>V</original>
    <variation>H</variation>
    <location>
        <position position="158"/>
    </location>
</feature>
<feature type="mutagenesis site" description="Almost completely abolishes the catalytic activity." evidence="4">
    <original>W</original>
    <variation>F</variation>
    <location>
        <position position="183"/>
    </location>
</feature>
<feature type="mutagenesis site" description="Strongly reduces the catalytic activity." evidence="4">
    <original>P</original>
    <variation>S</variation>
    <location>
        <position position="192"/>
    </location>
</feature>
<feature type="mutagenesis site" description="Retains 37% catalytic activity." evidence="4">
    <original>D</original>
    <variation>A</variation>
    <location>
        <position position="223"/>
    </location>
</feature>
<feature type="mutagenesis site" description="Retains about 40% catalytic activity." evidence="4">
    <original>D</original>
    <variation>A</variation>
    <location>
        <position position="223"/>
    </location>
</feature>
<feature type="mutagenesis site" description="Strongly reduces the catalytic activity." evidence="4">
    <original>H</original>
    <variation>A</variation>
    <location>
        <position position="242"/>
    </location>
</feature>
<feature type="strand" evidence="22">
    <location>
        <begin position="3"/>
        <end position="8"/>
    </location>
</feature>
<feature type="turn" evidence="23">
    <location>
        <begin position="10"/>
        <end position="12"/>
    </location>
</feature>
<feature type="strand" evidence="22">
    <location>
        <begin position="14"/>
        <end position="20"/>
    </location>
</feature>
<feature type="strand" evidence="22">
    <location>
        <begin position="22"/>
        <end position="29"/>
    </location>
</feature>
<feature type="helix" evidence="22">
    <location>
        <begin position="36"/>
        <end position="39"/>
    </location>
</feature>
<feature type="helix" evidence="22">
    <location>
        <begin position="40"/>
        <end position="47"/>
    </location>
</feature>
<feature type="turn" evidence="22">
    <location>
        <begin position="48"/>
        <end position="50"/>
    </location>
</feature>
<feature type="strand" evidence="22">
    <location>
        <begin position="52"/>
        <end position="56"/>
    </location>
</feature>
<feature type="helix" evidence="22">
    <location>
        <begin position="62"/>
        <end position="64"/>
    </location>
</feature>
<feature type="helix" evidence="22">
    <location>
        <begin position="69"/>
        <end position="71"/>
    </location>
</feature>
<feature type="helix" evidence="22">
    <location>
        <begin position="77"/>
        <end position="90"/>
    </location>
</feature>
<feature type="strand" evidence="22">
    <location>
        <begin position="95"/>
        <end position="101"/>
    </location>
</feature>
<feature type="helix" evidence="22">
    <location>
        <begin position="103"/>
        <end position="114"/>
    </location>
</feature>
<feature type="turn" evidence="22">
    <location>
        <begin position="116"/>
        <end position="118"/>
    </location>
</feature>
<feature type="strand" evidence="22">
    <location>
        <begin position="119"/>
        <end position="126"/>
    </location>
</feature>
<feature type="helix" evidence="22">
    <location>
        <begin position="133"/>
        <end position="136"/>
    </location>
</feature>
<feature type="helix" evidence="22">
    <location>
        <begin position="137"/>
        <end position="140"/>
    </location>
</feature>
<feature type="helix" evidence="22">
    <location>
        <begin position="143"/>
        <end position="156"/>
    </location>
</feature>
<feature type="helix" evidence="22">
    <location>
        <begin position="162"/>
        <end position="166"/>
    </location>
</feature>
<feature type="helix" evidence="22">
    <location>
        <begin position="170"/>
        <end position="186"/>
    </location>
</feature>
<feature type="turn" evidence="22">
    <location>
        <begin position="188"/>
        <end position="191"/>
    </location>
</feature>
<feature type="helix" evidence="22">
    <location>
        <begin position="192"/>
        <end position="194"/>
    </location>
</feature>
<feature type="helix" evidence="22">
    <location>
        <begin position="200"/>
        <end position="203"/>
    </location>
</feature>
<feature type="strand" evidence="22">
    <location>
        <begin position="206"/>
        <end position="213"/>
    </location>
</feature>
<feature type="helix" evidence="22">
    <location>
        <begin position="218"/>
        <end position="231"/>
    </location>
</feature>
<feature type="strand" evidence="22">
    <location>
        <begin position="234"/>
        <end position="242"/>
    </location>
</feature>
<feature type="helix" evidence="22">
    <location>
        <begin position="244"/>
        <end position="247"/>
    </location>
</feature>
<feature type="helix" evidence="22">
    <location>
        <begin position="249"/>
        <end position="264"/>
    </location>
</feature>
<gene>
    <name evidence="8" type="primary">zhd101</name>
</gene>
<protein>
    <recommendedName>
        <fullName evidence="8">Zearalenone hydrolase</fullName>
        <shortName evidence="8">ZHD</shortName>
        <ecNumber evidence="2 3 4 5 6">3.1.1.-</ecNumber>
    </recommendedName>
    <alternativeName>
        <fullName evidence="8">Lactonase</fullName>
    </alternativeName>
</protein>
<keyword id="KW-0002">3D-structure</keyword>
<keyword id="KW-0216">Detoxification</keyword>
<keyword id="KW-0378">Hydrolase</keyword>
<comment type="function">
    <text evidence="2 3 4 6">Lactonohydrolase that specifically hydrolyzes and deactivates the mycotoxin zearalenone (ZEN) and its zearalenol (ZOL) derivatives (PubMed:11978180, PubMed:28695844, Ref.2, Ref.4). ZHD101 prefers ZEN to ZOL as its substrate, but ZOL, especially the alpha-form, shows higher estrogenic toxicity than ZEN (PubMed:11978180).</text>
</comment>
<comment type="catalytic activity">
    <reaction evidence="2 3 4 5 6">
        <text>zearalenone + H2O = hydrolyzed zearalenone + H(+)</text>
        <dbReference type="Rhea" id="RHEA:79255"/>
        <dbReference type="ChEBI" id="CHEBI:10106"/>
        <dbReference type="ChEBI" id="CHEBI:15377"/>
        <dbReference type="ChEBI" id="CHEBI:15378"/>
        <dbReference type="ChEBI" id="CHEBI:229751"/>
    </reaction>
    <physiologicalReaction direction="left-to-right" evidence="2 4 5 6">
        <dbReference type="Rhea" id="RHEA:79256"/>
    </physiologicalReaction>
</comment>
<comment type="biophysicochemical properties">
    <kinetics>
        <KM evidence="6">63.8 uM for alpha-zearalenol</KM>
        <KM evidence="6">20.9 uM for beta-zearalenol</KM>
    </kinetics>
    <phDependence>
        <text evidence="2">Optimum pH is 9.5.</text>
    </phDependence>
</comment>
<comment type="subunit">
    <text evidence="2 4">Homodimer.</text>
</comment>
<comment type="similarity">
    <text evidence="9">Belongs to the AB hydrolase superfamily. Hydrolase RutD family.</text>
</comment>
<reference key="1">
    <citation type="journal article" date="2002" name="Biochem. J.">
        <title>A novel lactonohydrolase responsible for the detoxification of zearalenone: enzyme purification and gene cloning.</title>
        <authorList>
            <person name="Takahashi-Ando N."/>
            <person name="Kimura M."/>
            <person name="Kakeya H."/>
            <person name="Osada H."/>
            <person name="Yamaguchi I."/>
        </authorList>
    </citation>
    <scope>NUCLEOTIDE SEQUENCE [GENOMIC DNA]</scope>
    <scope>FUNCTION</scope>
    <scope>CATALYTIC ACTIVITY</scope>
    <scope>BIOPHYSICOCHEMICAL PROPERTIES</scope>
    <source>
        <strain>IFO 7063</strain>
    </source>
</reference>
<reference evidence="10 11" key="2">
    <citation type="journal article" date="2014" name="RSC Adv.">
        <title>Crystal structure and substrate-binding mode of the mycoestrogen-detoxifying lactonase ZHD from Clonostachys rosea.</title>
        <authorList>
            <person name="Peng W."/>
            <person name="Ko T.P."/>
            <person name="Yang Y."/>
            <person name="Zheng Y."/>
            <person name="Chen C.C."/>
            <person name="Zhu Z."/>
            <person name="Huang C.H."/>
            <person name="Zeng Y.F."/>
            <person name="Huang J.W."/>
            <person name="Wand A.H.-J."/>
            <person name="Liu J.R."/>
            <person name="Guo R.T."/>
        </authorList>
    </citation>
    <scope>X-RAY CRYSTALLOGRAPHY (2.48 ANGSTROMS) IN COMPLEX WITH ZEARALENONE</scope>
    <scope>SUBUNIT</scope>
    <scope>FUNCTION</scope>
    <scope>ACTIVE SITE</scope>
    <scope>CATALYTIC ACTIVITY</scope>
    <scope>MUTAGENESIS OF SER-102; GLU-126; HIS-134; VAL-153; VAL-158; TRP-183; PRO-192; ASP-223 AND HIS-242</scope>
</reference>
<reference evidence="12 13 14" key="3">
    <citation type="submission" date="2015-06" db="PDB data bank">
        <title>A case study of lactonase ZHD.</title>
        <authorList>
            <person name="Ming D.-M."/>
            <person name="Qi Q."/>
            <person name="Yang W.-J."/>
            <person name="Sun K.-L."/>
            <person name="Xu T.-Y."/>
            <person name="Huang Q."/>
            <person name="Hu X.-J."/>
            <person name="Lv H."/>
        </authorList>
    </citation>
    <scope>X-RAY CRYSTALLOGRAPHY (1.60 ANGSTROMS)</scope>
</reference>
<reference evidence="16 17 18 19" key="4">
    <citation type="journal article" date="2016" name="ACS Catal.">
        <title>Enhanced alpha-zearalenol hydrolyzing activity of a mycoestrogen-detoxifying lactonase by structure-based engineering.</title>
        <authorList>
            <person name="Xu Z.X."/>
            <person name="Liu W.D."/>
            <person name="Chen C.C."/>
            <person name="Li Q."/>
            <person name="Huang J.W."/>
            <person name="Ko T.P."/>
            <person name="Liu G."/>
            <person name="Liu W."/>
            <person name="Peng W."/>
            <person name="Cheng Y.S."/>
            <person name="Chen Y."/>
            <person name="Jin J."/>
            <person name="Li H."/>
            <person name="Zheng Y.Y."/>
            <person name="Guo R.T."/>
        </authorList>
    </citation>
    <scope>X-RAY CRYSTALLOGRAPHY (2.39 ANGSTROMS) IN COMPLEX WITH ZEARALENONE</scope>
    <scope>FUNCTION</scope>
    <scope>CATALYTIC ACTIVITY</scope>
    <scope>BIOPHYSICOCHEMICAL PROPERTIES</scope>
    <scope>SUBSTRATE SPECIFICITY</scope>
    <scope>MUTAGENESIS OF SER-102 AND VAL-153</scope>
</reference>
<reference evidence="15 20" key="5">
    <citation type="journal article" date="2017" name="Acta Crystallogr. F Struct. Biol. Commun.">
        <title>The structure of a complex of the lactonohydrolase zearalenone hydrolase with the hydrolysis product of zearalenone at 1.60A resolution.</title>
        <authorList>
            <person name="Qi Q."/>
            <person name="Yang W.J."/>
            <person name="Zhou H.J."/>
            <person name="Ming D.M."/>
            <person name="Sun K.L."/>
            <person name="Xu T.Y."/>
            <person name="Hu X.J."/>
            <person name="Lv H."/>
        </authorList>
    </citation>
    <scope>X-RAY CRYSTALLOGRAPHY (1.60 ANGSTROMS) IN COMPLEX WITH ZEARALENONE</scope>
    <scope>FUNCTION</scope>
    <scope>CATALYTIC ACTIVITY</scope>
    <scope>ACTIVE SITE</scope>
</reference>
<reference evidence="21" key="6">
    <citation type="submission" date="2019-04" db="PDB data bank">
        <title>Structure of ZHD complex.</title>
        <authorList>
            <person name="Hu X.J."/>
            <person name="Zhou H.J."/>
            <person name="Li L."/>
        </authorList>
    </citation>
    <scope>X-RAY CRYSTALLOGRAPHY (1.65 ANGSTROMS)</scope>
</reference>
<evidence type="ECO:0000255" key="1"/>
<evidence type="ECO:0000269" key="2">
    <source>
    </source>
</evidence>
<evidence type="ECO:0000269" key="3">
    <source>
    </source>
</evidence>
<evidence type="ECO:0000269" key="4">
    <source ref="2"/>
</evidence>
<evidence type="ECO:0000269" key="5">
    <source ref="3"/>
</evidence>
<evidence type="ECO:0000269" key="6">
    <source ref="4"/>
</evidence>
<evidence type="ECO:0000269" key="7">
    <source ref="6"/>
</evidence>
<evidence type="ECO:0000303" key="8">
    <source>
    </source>
</evidence>
<evidence type="ECO:0000305" key="9"/>
<evidence type="ECO:0007744" key="10">
    <source>
        <dbReference type="PDB" id="3WZL"/>
    </source>
</evidence>
<evidence type="ECO:0007744" key="11">
    <source>
        <dbReference type="PDB" id="3WZM"/>
    </source>
</evidence>
<evidence type="ECO:0007744" key="12">
    <source>
        <dbReference type="PDB" id="5C7Y"/>
    </source>
</evidence>
<evidence type="ECO:0007744" key="13">
    <source>
        <dbReference type="PDB" id="5C81"/>
    </source>
</evidence>
<evidence type="ECO:0007744" key="14">
    <source>
        <dbReference type="PDB" id="5C8X"/>
    </source>
</evidence>
<evidence type="ECO:0007744" key="15">
    <source>
        <dbReference type="PDB" id="5C8Z"/>
    </source>
</evidence>
<evidence type="ECO:0007744" key="16">
    <source>
        <dbReference type="PDB" id="5IE4"/>
    </source>
</evidence>
<evidence type="ECO:0007744" key="17">
    <source>
        <dbReference type="PDB" id="5IE5"/>
    </source>
</evidence>
<evidence type="ECO:0007744" key="18">
    <source>
        <dbReference type="PDB" id="5IE6"/>
    </source>
</evidence>
<evidence type="ECO:0007744" key="19">
    <source>
        <dbReference type="PDB" id="5IE7"/>
    </source>
</evidence>
<evidence type="ECO:0007744" key="20">
    <source>
        <dbReference type="PDB" id="5XMW"/>
    </source>
</evidence>
<evidence type="ECO:0007744" key="21">
    <source>
        <dbReference type="PDB" id="6JRD"/>
    </source>
</evidence>
<evidence type="ECO:0007829" key="22">
    <source>
        <dbReference type="PDB" id="5C8Z"/>
    </source>
</evidence>
<evidence type="ECO:0007829" key="23">
    <source>
        <dbReference type="PDB" id="5IE5"/>
    </source>
</evidence>
<sequence length="264" mass="28750">MRTRSTISTPNGITWYYEQEGTGPDVVLVPDGLGECQMFDSSVSQIAAQGFRVTTFDMPGMSRSAKAPPETYTEVTAQKLASYVISVLDALDIKHATVWGCSSGASTVVALLLGYPDRIRNAMCHELPTKLLDHLSNTAVLEDEEISKILANVMLNDVSGGSEAWQAMGDEVHARLHKNYPVWARGYPRTIPPSAPVKDLEALRGKPLDWTVGAATPTESFFDNIVTATKAGVNIGLLPGMHFPYVSHPDVFAKYVVETTQKHL</sequence>
<accession>Q8NKB0</accession>
<proteinExistence type="evidence at protein level"/>
<organism>
    <name type="scientific">Bionectria ochroleuca</name>
    <name type="common">Gliocladium roseum</name>
    <dbReference type="NCBI Taxonomy" id="29856"/>
    <lineage>
        <taxon>Eukaryota</taxon>
        <taxon>Fungi</taxon>
        <taxon>Dikarya</taxon>
        <taxon>Ascomycota</taxon>
        <taxon>Pezizomycotina</taxon>
        <taxon>Sordariomycetes</taxon>
        <taxon>Hypocreomycetidae</taxon>
        <taxon>Hypocreales</taxon>
        <taxon>Bionectriaceae</taxon>
        <taxon>Clonostachys</taxon>
    </lineage>
</organism>